<evidence type="ECO:0000255" key="1">
    <source>
        <dbReference type="HAMAP-Rule" id="MF_00200"/>
    </source>
</evidence>
<feature type="chain" id="PRO_0000264796" description="RNA 3'-terminal phosphate cyclase">
    <location>
        <begin position="1"/>
        <end position="361"/>
    </location>
</feature>
<feature type="active site" description="Tele-AMP-histidine intermediate" evidence="1">
    <location>
        <position position="319"/>
    </location>
</feature>
<feature type="binding site" evidence="1">
    <location>
        <position position="109"/>
    </location>
    <ligand>
        <name>ATP</name>
        <dbReference type="ChEBI" id="CHEBI:30616"/>
    </ligand>
</feature>
<feature type="binding site" evidence="1">
    <location>
        <begin position="293"/>
        <end position="297"/>
    </location>
    <ligand>
        <name>ATP</name>
        <dbReference type="ChEBI" id="CHEBI:30616"/>
    </ligand>
</feature>
<accession>Q609M1</accession>
<gene>
    <name evidence="1" type="primary">rtcA</name>
    <name type="ordered locus">MCA1212</name>
</gene>
<dbReference type="EC" id="6.5.1.4" evidence="1"/>
<dbReference type="EMBL" id="AE017282">
    <property type="protein sequence ID" value="AAU92541.1"/>
    <property type="molecule type" value="Genomic_DNA"/>
</dbReference>
<dbReference type="RefSeq" id="WP_010960498.1">
    <property type="nucleotide sequence ID" value="NC_002977.6"/>
</dbReference>
<dbReference type="SMR" id="Q609M1"/>
<dbReference type="STRING" id="243233.MCA1212"/>
<dbReference type="GeneID" id="88223499"/>
<dbReference type="KEGG" id="mca:MCA1212"/>
<dbReference type="eggNOG" id="COG0430">
    <property type="taxonomic scope" value="Bacteria"/>
</dbReference>
<dbReference type="HOGENOM" id="CLU_027882_0_0_6"/>
<dbReference type="Proteomes" id="UP000006821">
    <property type="component" value="Chromosome"/>
</dbReference>
<dbReference type="GO" id="GO:0005737">
    <property type="term" value="C:cytoplasm"/>
    <property type="evidence" value="ECO:0007669"/>
    <property type="project" value="UniProtKB-SubCell"/>
</dbReference>
<dbReference type="GO" id="GO:0005524">
    <property type="term" value="F:ATP binding"/>
    <property type="evidence" value="ECO:0007669"/>
    <property type="project" value="UniProtKB-KW"/>
</dbReference>
<dbReference type="GO" id="GO:0003963">
    <property type="term" value="F:RNA-3'-phosphate cyclase activity"/>
    <property type="evidence" value="ECO:0007669"/>
    <property type="project" value="UniProtKB-UniRule"/>
</dbReference>
<dbReference type="GO" id="GO:0006396">
    <property type="term" value="P:RNA processing"/>
    <property type="evidence" value="ECO:0007669"/>
    <property type="project" value="InterPro"/>
</dbReference>
<dbReference type="Gene3D" id="3.65.10.20">
    <property type="entry name" value="RNA 3'-terminal phosphate cyclase domain"/>
    <property type="match status" value="1"/>
</dbReference>
<dbReference type="Gene3D" id="3.30.360.20">
    <property type="entry name" value="RNA 3'-terminal phosphate cyclase, insert domain"/>
    <property type="match status" value="1"/>
</dbReference>
<dbReference type="HAMAP" id="MF_00200">
    <property type="entry name" value="RTC"/>
    <property type="match status" value="1"/>
</dbReference>
<dbReference type="InterPro" id="IPR013791">
    <property type="entry name" value="RNA3'-term_phos_cycl_insert"/>
</dbReference>
<dbReference type="InterPro" id="IPR023797">
    <property type="entry name" value="RNA3'_phos_cyclase_dom"/>
</dbReference>
<dbReference type="InterPro" id="IPR037136">
    <property type="entry name" value="RNA3'_phos_cyclase_dom_sf"/>
</dbReference>
<dbReference type="InterPro" id="IPR000228">
    <property type="entry name" value="RNA3'_term_phos_cyc"/>
</dbReference>
<dbReference type="InterPro" id="IPR017770">
    <property type="entry name" value="RNA3'_term_phos_cyc_type_1"/>
</dbReference>
<dbReference type="InterPro" id="IPR013792">
    <property type="entry name" value="RNA3'P_cycl/enolpyr_Trfase_a/b"/>
</dbReference>
<dbReference type="InterPro" id="IPR036553">
    <property type="entry name" value="RPTC_insert"/>
</dbReference>
<dbReference type="NCBIfam" id="NF003246">
    <property type="entry name" value="PRK04204.1-2"/>
    <property type="match status" value="1"/>
</dbReference>
<dbReference type="NCBIfam" id="TIGR03399">
    <property type="entry name" value="RNA_3prim_cycl"/>
    <property type="match status" value="1"/>
</dbReference>
<dbReference type="PANTHER" id="PTHR11096">
    <property type="entry name" value="RNA 3' TERMINAL PHOSPHATE CYCLASE"/>
    <property type="match status" value="1"/>
</dbReference>
<dbReference type="PANTHER" id="PTHR11096:SF0">
    <property type="entry name" value="RNA 3'-TERMINAL PHOSPHATE CYCLASE"/>
    <property type="match status" value="1"/>
</dbReference>
<dbReference type="Pfam" id="PF01137">
    <property type="entry name" value="RTC"/>
    <property type="match status" value="1"/>
</dbReference>
<dbReference type="Pfam" id="PF05189">
    <property type="entry name" value="RTC_insert"/>
    <property type="match status" value="1"/>
</dbReference>
<dbReference type="PIRSF" id="PIRSF005378">
    <property type="entry name" value="RNA3'_term_phos_cycl_euk"/>
    <property type="match status" value="1"/>
</dbReference>
<dbReference type="SUPFAM" id="SSF55205">
    <property type="entry name" value="EPT/RTPC-like"/>
    <property type="match status" value="1"/>
</dbReference>
<dbReference type="SUPFAM" id="SSF52913">
    <property type="entry name" value="RNA 3'-terminal phosphate cyclase, RPTC, insert domain"/>
    <property type="match status" value="1"/>
</dbReference>
<proteinExistence type="inferred from homology"/>
<organism>
    <name type="scientific">Methylococcus capsulatus (strain ATCC 33009 / NCIMB 11132 / Bath)</name>
    <dbReference type="NCBI Taxonomy" id="243233"/>
    <lineage>
        <taxon>Bacteria</taxon>
        <taxon>Pseudomonadati</taxon>
        <taxon>Pseudomonadota</taxon>
        <taxon>Gammaproteobacteria</taxon>
        <taxon>Methylococcales</taxon>
        <taxon>Methylococcaceae</taxon>
        <taxon>Methylococcus</taxon>
    </lineage>
</organism>
<comment type="function">
    <text evidence="1">Catalyzes the conversion of 3'-phosphate to a 2',3'-cyclic phosphodiester at the end of RNA. The mechanism of action of the enzyme occurs in 3 steps: (A) adenylation of the enzyme by ATP; (B) transfer of adenylate to an RNA-N3'P to produce RNA-N3'PP5'A; (C) and attack of the adjacent 2'-hydroxyl on the 3'-phosphorus in the diester linkage to produce the cyclic end product. The biological role of this enzyme is unknown but it is likely to function in some aspects of cellular RNA processing.</text>
</comment>
<comment type="catalytic activity">
    <reaction evidence="1">
        <text>a 3'-end 3'-phospho-ribonucleotide-RNA + ATP = a 3'-end 2',3'-cyclophospho-ribonucleotide-RNA + AMP + diphosphate</text>
        <dbReference type="Rhea" id="RHEA:23976"/>
        <dbReference type="Rhea" id="RHEA-COMP:10463"/>
        <dbReference type="Rhea" id="RHEA-COMP:10464"/>
        <dbReference type="ChEBI" id="CHEBI:30616"/>
        <dbReference type="ChEBI" id="CHEBI:33019"/>
        <dbReference type="ChEBI" id="CHEBI:83062"/>
        <dbReference type="ChEBI" id="CHEBI:83064"/>
        <dbReference type="ChEBI" id="CHEBI:456215"/>
        <dbReference type="EC" id="6.5.1.4"/>
    </reaction>
</comment>
<comment type="subcellular location">
    <subcellularLocation>
        <location evidence="1">Cytoplasm</location>
    </subcellularLocation>
</comment>
<comment type="similarity">
    <text evidence="1">Belongs to the RNA 3'-terminal cyclase family. Type 1 subfamily.</text>
</comment>
<keyword id="KW-0067">ATP-binding</keyword>
<keyword id="KW-0963">Cytoplasm</keyword>
<keyword id="KW-0436">Ligase</keyword>
<keyword id="KW-0547">Nucleotide-binding</keyword>
<keyword id="KW-1185">Reference proteome</keyword>
<protein>
    <recommendedName>
        <fullName evidence="1">RNA 3'-terminal phosphate cyclase</fullName>
        <shortName evidence="1">RNA cyclase</shortName>
        <shortName evidence="1">RNA-3'-phosphate cyclase</shortName>
        <ecNumber evidence="1">6.5.1.4</ecNumber>
    </recommendedName>
</protein>
<sequence length="361" mass="37839">MTLLRIDGSYGEGGGQIIRTALSLAALTGTAVRLENIRARRRKPGLAAQHLTAVKAVALLCDARIGGAELGSQTLEFIPGRPVRAGDYTLDVGEAREGGSAGAVMLVLQTVLPPLALAEGASTVSLRGGTHVPMSPPFDYVREVWLPTLARMGVRAELSLVRSGWYPVGKGEVRLVVAGGRRSLEALKARHRGTLQAVTGRALAANLPAHIPERMAARARAVLADAGIAAAIEPAVLQAACAGAGLFLTARYDHCLAGFTALGRRGKSAERVAEEACGALLAHHRSGAALDQHLADQIVLPAALCREESLFSVERITPHLTTNAWVVDRFGLARVDVRLAECGTGLVRIHGNPAGVCHAHP</sequence>
<reference key="1">
    <citation type="journal article" date="2004" name="PLoS Biol.">
        <title>Genomic insights into methanotrophy: the complete genome sequence of Methylococcus capsulatus (Bath).</title>
        <authorList>
            <person name="Ward N.L."/>
            <person name="Larsen O."/>
            <person name="Sakwa J."/>
            <person name="Bruseth L."/>
            <person name="Khouri H.M."/>
            <person name="Durkin A.S."/>
            <person name="Dimitrov G."/>
            <person name="Jiang L."/>
            <person name="Scanlan D."/>
            <person name="Kang K.H."/>
            <person name="Lewis M.R."/>
            <person name="Nelson K.E."/>
            <person name="Methe B.A."/>
            <person name="Wu M."/>
            <person name="Heidelberg J.F."/>
            <person name="Paulsen I.T."/>
            <person name="Fouts D.E."/>
            <person name="Ravel J."/>
            <person name="Tettelin H."/>
            <person name="Ren Q."/>
            <person name="Read T.D."/>
            <person name="DeBoy R.T."/>
            <person name="Seshadri R."/>
            <person name="Salzberg S.L."/>
            <person name="Jensen H.B."/>
            <person name="Birkeland N.K."/>
            <person name="Nelson W.C."/>
            <person name="Dodson R.J."/>
            <person name="Grindhaug S.H."/>
            <person name="Holt I.E."/>
            <person name="Eidhammer I."/>
            <person name="Jonasen I."/>
            <person name="Vanaken S."/>
            <person name="Utterback T.R."/>
            <person name="Feldblyum T.V."/>
            <person name="Fraser C.M."/>
            <person name="Lillehaug J.R."/>
            <person name="Eisen J.A."/>
        </authorList>
    </citation>
    <scope>NUCLEOTIDE SEQUENCE [LARGE SCALE GENOMIC DNA]</scope>
    <source>
        <strain>ATCC 33009 / NCIMB 11132 / Bath</strain>
    </source>
</reference>
<name>RTCA_METCA</name>